<reference key="1">
    <citation type="submission" date="2005-03" db="EMBL/GenBank/DDBJ databases">
        <authorList>
            <consortium name="NIH - Zebrafish Gene Collection (ZGC) project"/>
        </authorList>
    </citation>
    <scope>NUCLEOTIDE SEQUENCE [LARGE SCALE MRNA]</scope>
    <source>
        <tissue>Embryo</tissue>
    </source>
</reference>
<dbReference type="EC" id="1.7.-.-" evidence="2"/>
<dbReference type="EMBL" id="BC091870">
    <property type="protein sequence ID" value="AAH91870.1"/>
    <property type="molecule type" value="mRNA"/>
</dbReference>
<dbReference type="SMR" id="Q58EJ9"/>
<dbReference type="FunCoup" id="Q58EJ9">
    <property type="interactions" value="415"/>
</dbReference>
<dbReference type="STRING" id="7955.ENSDARP00000094269"/>
<dbReference type="PaxDb" id="7955-ENSDARP00000094269"/>
<dbReference type="AGR" id="ZFIN:ZDB-GENE-050327-95"/>
<dbReference type="ZFIN" id="ZDB-GENE-050327-95">
    <property type="gene designation" value="marc1"/>
</dbReference>
<dbReference type="eggNOG" id="KOG2362">
    <property type="taxonomic scope" value="Eukaryota"/>
</dbReference>
<dbReference type="InParanoid" id="Q58EJ9"/>
<dbReference type="PhylomeDB" id="Q58EJ9"/>
<dbReference type="Reactome" id="R-DRE-211945">
    <property type="pathway name" value="Phase I - Functionalization of compounds"/>
</dbReference>
<dbReference type="PRO" id="PR:Q58EJ9"/>
<dbReference type="Proteomes" id="UP000000437">
    <property type="component" value="Unplaced"/>
</dbReference>
<dbReference type="GO" id="GO:0005741">
    <property type="term" value="C:mitochondrial outer membrane"/>
    <property type="evidence" value="ECO:0007669"/>
    <property type="project" value="UniProtKB-SubCell"/>
</dbReference>
<dbReference type="GO" id="GO:0030151">
    <property type="term" value="F:molybdenum ion binding"/>
    <property type="evidence" value="ECO:0000318"/>
    <property type="project" value="GO_Central"/>
</dbReference>
<dbReference type="GO" id="GO:0043546">
    <property type="term" value="F:molybdopterin cofactor binding"/>
    <property type="evidence" value="ECO:0000318"/>
    <property type="project" value="GO_Central"/>
</dbReference>
<dbReference type="GO" id="GO:0008940">
    <property type="term" value="F:nitrate reductase activity"/>
    <property type="evidence" value="ECO:0000318"/>
    <property type="project" value="GO_Central"/>
</dbReference>
<dbReference type="GO" id="GO:0030170">
    <property type="term" value="F:pyridoxal phosphate binding"/>
    <property type="evidence" value="ECO:0007669"/>
    <property type="project" value="InterPro"/>
</dbReference>
<dbReference type="GO" id="GO:0042126">
    <property type="term" value="P:nitrate metabolic process"/>
    <property type="evidence" value="ECO:0000318"/>
    <property type="project" value="GO_Central"/>
</dbReference>
<dbReference type="InterPro" id="IPR005302">
    <property type="entry name" value="MoCF_Sase_C"/>
</dbReference>
<dbReference type="InterPro" id="IPR005303">
    <property type="entry name" value="MOCOS_middle"/>
</dbReference>
<dbReference type="InterPro" id="IPR011037">
    <property type="entry name" value="Pyrv_Knase-like_insert_dom_sf"/>
</dbReference>
<dbReference type="PANTHER" id="PTHR14237:SF19">
    <property type="entry name" value="MITOCHONDRIAL AMIDOXIME REDUCING COMPONENT 1"/>
    <property type="match status" value="1"/>
</dbReference>
<dbReference type="PANTHER" id="PTHR14237">
    <property type="entry name" value="MOLYBDOPTERIN COFACTOR SULFURASE MOSC"/>
    <property type="match status" value="1"/>
</dbReference>
<dbReference type="Pfam" id="PF03473">
    <property type="entry name" value="MOSC"/>
    <property type="match status" value="1"/>
</dbReference>
<dbReference type="Pfam" id="PF03476">
    <property type="entry name" value="MOSC_N"/>
    <property type="match status" value="1"/>
</dbReference>
<dbReference type="SUPFAM" id="SSF141673">
    <property type="entry name" value="MOSC N-terminal domain-like"/>
    <property type="match status" value="1"/>
</dbReference>
<dbReference type="SUPFAM" id="SSF50800">
    <property type="entry name" value="PK beta-barrel domain-like"/>
    <property type="match status" value="1"/>
</dbReference>
<dbReference type="PROSITE" id="PS51340">
    <property type="entry name" value="MOSC"/>
    <property type="match status" value="1"/>
</dbReference>
<name>MARC1_DANRE</name>
<comment type="function">
    <text evidence="2">Catalyzes the reduction of N-oxygenated molecules, acting as a counterpart of cytochrome P450 and flavin-containing monooxygenases in metabolic cycles. As a component of prodrug-converting system, reduces a multitude of N-hydroxylated prodrugs particularly amidoximes, leading to increased drug bioavailability. May be involved in mitochondrial N(omega)-hydroxy-L-arginine (NOHA) reduction, regulating endogenous nitric oxide levels and biosynthesis. Postulated to cleave the N-OH bond of N-hydroxylated substrates in concert with electron transfer from NADH to cytochrome b5 reductase then to cytochrome b5, the ultimate electron donor that primes the active site for substrate reduction.</text>
</comment>
<comment type="catalytic activity">
    <reaction evidence="2">
        <text>N(omega)-hydroxy-L-arginine + 2 Fe(II)-[cytochrome b5] + 2 H(+) = L-arginine + 2 Fe(III)-[cytochrome b5] + H2O</text>
        <dbReference type="Rhea" id="RHEA:61644"/>
        <dbReference type="Rhea" id="RHEA-COMP:10438"/>
        <dbReference type="Rhea" id="RHEA-COMP:10439"/>
        <dbReference type="ChEBI" id="CHEBI:15377"/>
        <dbReference type="ChEBI" id="CHEBI:15378"/>
        <dbReference type="ChEBI" id="CHEBI:29033"/>
        <dbReference type="ChEBI" id="CHEBI:29034"/>
        <dbReference type="ChEBI" id="CHEBI:32682"/>
        <dbReference type="ChEBI" id="CHEBI:60107"/>
    </reaction>
    <physiologicalReaction direction="left-to-right" evidence="2">
        <dbReference type="Rhea" id="RHEA:61645"/>
    </physiologicalReaction>
</comment>
<comment type="cofactor">
    <cofactor evidence="2">
        <name>Mo-molybdopterin</name>
        <dbReference type="ChEBI" id="CHEBI:71302"/>
    </cofactor>
    <text evidence="2">Binds 1 Mo-molybdopterin (Mo-MPT) cofactor per subunit.</text>
</comment>
<comment type="subcellular location">
    <subcellularLocation>
        <location evidence="2">Mitochondrion outer membrane</location>
        <topology evidence="2">Single-pass type II membrane protein</topology>
    </subcellularLocation>
    <subcellularLocation>
        <location evidence="2">Membrane</location>
        <topology evidence="2">Lipid-anchor</topology>
    </subcellularLocation>
    <text evidence="2">Mitochondrial import is mediated by AA 1-36 and requires ATP.</text>
</comment>
<comment type="domain">
    <text evidence="2">Comprises two structural domains, the molybdenum cofactor/Moco sulfurase C-terminal (MOSC) domain and the MOSC N-terminal region, forming a cleft that accommodates Moco. The MOSC domain, which contains a large seven-stranded mostly antiparallel beta-barrel, engages multiple interactions with Moco both pterin ring and phosphate group, allowing for a tight coordination of Moco within the core of the enzyme.</text>
</comment>
<sequence length="325" mass="36716">MDLKEAFATIFDQNRKVALYAAGTTVAVLGLGLVFKYMRREEKLTRVGVVTKLLVHPLKSGKAVSVEAAECLRMGLKYGELRDRHWLVITEDGHMVTGRQQPRLVLVSLTCEGGHVSLNGPQMEELKFPLNNSSDLVVDCRVFSVDVQGRDCGDKVSEWLTRFLEADKPVRLVHYEPDLKPQRPHEKEPLFPKDDEVAYPDAAPVMLMTEASVGDLNSRLDKDLSVFQFRPSIVVSDCEAFTEDTWDHIRIGEVELKRVIGCGRCLFTTVDPETGVFSRKEPLETLKTYRMTDPKQKTSPILGQYYTVRKTGVLHVGEPVYKITY</sequence>
<accession>Q58EJ9</accession>
<proteinExistence type="evidence at transcript level"/>
<evidence type="ECO:0000250" key="1"/>
<evidence type="ECO:0000250" key="2">
    <source>
        <dbReference type="UniProtKB" id="Q5VT66"/>
    </source>
</evidence>
<evidence type="ECO:0000255" key="3"/>
<evidence type="ECO:0000255" key="4">
    <source>
        <dbReference type="PROSITE-ProRule" id="PRU00670"/>
    </source>
</evidence>
<keyword id="KW-0449">Lipoprotein</keyword>
<keyword id="KW-0472">Membrane</keyword>
<keyword id="KW-0479">Metal-binding</keyword>
<keyword id="KW-0496">Mitochondrion</keyword>
<keyword id="KW-1000">Mitochondrion outer membrane</keyword>
<keyword id="KW-0500">Molybdenum</keyword>
<keyword id="KW-0560">Oxidoreductase</keyword>
<keyword id="KW-1185">Reference proteome</keyword>
<keyword id="KW-0735">Signal-anchor</keyword>
<keyword id="KW-0812">Transmembrane</keyword>
<keyword id="KW-1133">Transmembrane helix</keyword>
<organism>
    <name type="scientific">Danio rerio</name>
    <name type="common">Zebrafish</name>
    <name type="synonym">Brachydanio rerio</name>
    <dbReference type="NCBI Taxonomy" id="7955"/>
    <lineage>
        <taxon>Eukaryota</taxon>
        <taxon>Metazoa</taxon>
        <taxon>Chordata</taxon>
        <taxon>Craniata</taxon>
        <taxon>Vertebrata</taxon>
        <taxon>Euteleostomi</taxon>
        <taxon>Actinopterygii</taxon>
        <taxon>Neopterygii</taxon>
        <taxon>Teleostei</taxon>
        <taxon>Ostariophysi</taxon>
        <taxon>Cypriniformes</taxon>
        <taxon>Danionidae</taxon>
        <taxon>Danioninae</taxon>
        <taxon>Danio</taxon>
    </lineage>
</organism>
<protein>
    <recommendedName>
        <fullName evidence="2">Mitochondrial amidoxime-reducing component 1</fullName>
        <shortName evidence="2">mARC1</shortName>
        <ecNumber evidence="2">1.7.-.-</ecNumber>
    </recommendedName>
</protein>
<feature type="chain" id="PRO_0000273337" description="Mitochondrial amidoxime-reducing component 1">
    <location>
        <begin position="1"/>
        <end position="325"/>
    </location>
</feature>
<feature type="topological domain" description="Mitochondrial matrix" evidence="1">
    <location>
        <begin position="1"/>
        <end position="16"/>
    </location>
</feature>
<feature type="transmembrane region" description="Helical; Signal-anchor for type II membrane protein" evidence="3">
    <location>
        <begin position="17"/>
        <end position="36"/>
    </location>
</feature>
<feature type="topological domain" description="Cytoplasmic" evidence="1">
    <location>
        <begin position="37"/>
        <end position="325"/>
    </location>
</feature>
<feature type="domain" description="MOSC" evidence="4">
    <location>
        <begin position="179"/>
        <end position="323"/>
    </location>
</feature>
<feature type="region of interest" description="MOSC N-terminal region" evidence="2">
    <location>
        <begin position="85"/>
        <end position="175"/>
    </location>
</feature>
<feature type="binding site" evidence="2">
    <location>
        <position position="59"/>
    </location>
    <ligand>
        <name>Mo-molybdopterin</name>
        <dbReference type="ChEBI" id="CHEBI:71302"/>
    </ligand>
</feature>
<feature type="binding site" evidence="2">
    <location>
        <position position="60"/>
    </location>
    <ligand>
        <name>Mo-molybdopterin</name>
        <dbReference type="ChEBI" id="CHEBI:71302"/>
    </ligand>
</feature>
<feature type="binding site" evidence="2">
    <location>
        <position position="84"/>
    </location>
    <ligand>
        <name>Mo-molybdopterin</name>
        <dbReference type="ChEBI" id="CHEBI:71302"/>
    </ligand>
</feature>
<feature type="binding site" evidence="2">
    <location>
        <position position="230"/>
    </location>
    <ligand>
        <name>Mo-molybdopterin</name>
        <dbReference type="ChEBI" id="CHEBI:71302"/>
    </ligand>
</feature>
<feature type="binding site" evidence="2">
    <location>
        <position position="264"/>
    </location>
    <ligand>
        <name>Mo-molybdopterin</name>
        <dbReference type="ChEBI" id="CHEBI:71302"/>
    </ligand>
</feature>
<feature type="binding site" evidence="2">
    <location>
        <position position="265"/>
    </location>
    <ligand>
        <name>Mo-molybdopterin</name>
        <dbReference type="ChEBI" id="CHEBI:71302"/>
    </ligand>
    <ligandPart>
        <name>Mo</name>
        <dbReference type="ChEBI" id="CHEBI:28685"/>
    </ligandPart>
</feature>
<feature type="binding site" evidence="2">
    <location>
        <position position="305"/>
    </location>
    <ligand>
        <name>Mo-molybdopterin</name>
        <dbReference type="ChEBI" id="CHEBI:71302"/>
    </ligand>
</feature>
<gene>
    <name type="primary">mtarc1</name>
    <name type="synonym">marc1</name>
    <name type="ORF">zgc:110783</name>
</gene>